<feature type="chain" id="PRO_0000063987" description="Aquaporin Z">
    <location>
        <begin position="1"/>
        <end position="229"/>
    </location>
</feature>
<feature type="transmembrane region" description="Helical" evidence="1">
    <location>
        <begin position="8"/>
        <end position="28"/>
    </location>
</feature>
<feature type="transmembrane region" description="Helical" evidence="1">
    <location>
        <begin position="33"/>
        <end position="53"/>
    </location>
</feature>
<feature type="transmembrane region" description="Helical" evidence="1">
    <location>
        <begin position="88"/>
        <end position="108"/>
    </location>
</feature>
<feature type="transmembrane region" description="Helical" evidence="1">
    <location>
        <begin position="129"/>
        <end position="149"/>
    </location>
</feature>
<feature type="transmembrane region" description="Helical" evidence="1">
    <location>
        <begin position="158"/>
        <end position="178"/>
    </location>
</feature>
<feature type="transmembrane region" description="Helical" evidence="1">
    <location>
        <begin position="192"/>
        <end position="212"/>
    </location>
</feature>
<feature type="short sequence motif" description="NPA 1" evidence="1">
    <location>
        <begin position="62"/>
        <end position="64"/>
    </location>
</feature>
<feature type="short sequence motif" description="NPA 2" evidence="1">
    <location>
        <begin position="184"/>
        <end position="186"/>
    </location>
</feature>
<feature type="site" description="Involved in tetramerization or stability of the tetramer" evidence="1">
    <location>
        <position position="19"/>
    </location>
</feature>
<feature type="site" description="Selectivity filter" evidence="1">
    <location>
        <position position="42"/>
    </location>
</feature>
<feature type="site" description="Selectivity filter" evidence="1">
    <location>
        <position position="172"/>
    </location>
</feature>
<feature type="site" description="Selectivity filter" evidence="1">
    <location>
        <position position="181"/>
    </location>
</feature>
<feature type="site" description="Selectivity filter" evidence="1">
    <location>
        <position position="187"/>
    </location>
</feature>
<sequence length="229" mass="23228">MKSYGAEFLGTFWLVLGGCGSAVLAAGFPNLGIGFAGVALAFGLTVVTMAYAIGHISGCHLNPAVSIGLWAGGRFPAGQLAPYIVAQVLGAIAAGAVLYVIASGGAGFDVAKGFASNGYAEHSPGGYSLLAALVCEVVMTMFFLLVIMGATDKRAPAGFAPLAIGLALTLIHLISIPVTNTSVNPARSTGVALFVGGWAVQQLWLFWLAPIIGAVLGAKVYRLIAGESE</sequence>
<organism>
    <name type="scientific">Chromobacterium violaceum (strain ATCC 12472 / DSM 30191 / JCM 1249 / CCUG 213 / NBRC 12614 / NCIMB 9131 / NCTC 9757 / MK)</name>
    <dbReference type="NCBI Taxonomy" id="243365"/>
    <lineage>
        <taxon>Bacteria</taxon>
        <taxon>Pseudomonadati</taxon>
        <taxon>Pseudomonadota</taxon>
        <taxon>Betaproteobacteria</taxon>
        <taxon>Neisseriales</taxon>
        <taxon>Chromobacteriaceae</taxon>
        <taxon>Chromobacterium</taxon>
    </lineage>
</organism>
<comment type="function">
    <text evidence="1">Channel that permits osmotically driven movement of water in both directions. It is involved in the osmoregulation and in the maintenance of cell turgor during volume expansion in rapidly growing cells. It mediates rapid entry or exit of water in response to abrupt changes in osmolarity.</text>
</comment>
<comment type="catalytic activity">
    <reaction evidence="1">
        <text>H2O(in) = H2O(out)</text>
        <dbReference type="Rhea" id="RHEA:29667"/>
        <dbReference type="ChEBI" id="CHEBI:15377"/>
    </reaction>
    <physiologicalReaction direction="left-to-right" evidence="1">
        <dbReference type="Rhea" id="RHEA:29668"/>
    </physiologicalReaction>
    <physiologicalReaction direction="right-to-left" evidence="1">
        <dbReference type="Rhea" id="RHEA:29669"/>
    </physiologicalReaction>
</comment>
<comment type="subunit">
    <text evidence="1">Homotetramer.</text>
</comment>
<comment type="subcellular location">
    <subcellularLocation>
        <location evidence="1">Cell inner membrane</location>
        <topology evidence="1">Multi-pass membrane protein</topology>
    </subcellularLocation>
</comment>
<comment type="domain">
    <text evidence="1">Aquaporins contain two tandem repeats each containing three membrane-spanning domains and a pore-forming loop with the signature motif Asn-Pro-Ala (NPA).</text>
</comment>
<comment type="similarity">
    <text evidence="1">Belongs to the MIP/aquaporin (TC 1.A.8) family.</text>
</comment>
<reference key="1">
    <citation type="journal article" date="2003" name="Proc. Natl. Acad. Sci. U.S.A.">
        <title>The complete genome sequence of Chromobacterium violaceum reveals remarkable and exploitable bacterial adaptability.</title>
        <authorList>
            <person name="Vasconcelos A.T.R."/>
            <person name="de Almeida D.F."/>
            <person name="Hungria M."/>
            <person name="Guimaraes C.T."/>
            <person name="Antonio R.V."/>
            <person name="Almeida F.C."/>
            <person name="de Almeida L.G.P."/>
            <person name="de Almeida R."/>
            <person name="Alves-Gomes J.A."/>
            <person name="Andrade E.M."/>
            <person name="Araripe J."/>
            <person name="de Araujo M.F.F."/>
            <person name="Astolfi-Filho S."/>
            <person name="Azevedo V."/>
            <person name="Baptista A.J."/>
            <person name="Bataus L.A.M."/>
            <person name="Batista J.S."/>
            <person name="Belo A."/>
            <person name="van den Berg C."/>
            <person name="Bogo M."/>
            <person name="Bonatto S."/>
            <person name="Bordignon J."/>
            <person name="Brigido M.M."/>
            <person name="Brito C.A."/>
            <person name="Brocchi M."/>
            <person name="Burity H.A."/>
            <person name="Camargo A.A."/>
            <person name="Cardoso D.D.P."/>
            <person name="Carneiro N.P."/>
            <person name="Carraro D.M."/>
            <person name="Carvalho C.M.B."/>
            <person name="Cascardo J.C.M."/>
            <person name="Cavada B.S."/>
            <person name="Chueire L.M.O."/>
            <person name="Creczynski-Pasa T.B."/>
            <person name="Cunha-Junior N.C."/>
            <person name="Fagundes N."/>
            <person name="Falcao C.L."/>
            <person name="Fantinatti F."/>
            <person name="Farias I.P."/>
            <person name="Felipe M.S.S."/>
            <person name="Ferrari L.P."/>
            <person name="Ferro J.A."/>
            <person name="Ferro M.I.T."/>
            <person name="Franco G.R."/>
            <person name="Freitas N.S.A."/>
            <person name="Furlan L.R."/>
            <person name="Gazzinelli R.T."/>
            <person name="Gomes E.A."/>
            <person name="Goncalves P.R."/>
            <person name="Grangeiro T.B."/>
            <person name="Grattapaglia D."/>
            <person name="Grisard E.C."/>
            <person name="Hanna E.S."/>
            <person name="Jardim S.N."/>
            <person name="Laurino J."/>
            <person name="Leoi L.C.T."/>
            <person name="Lima L.F.A."/>
            <person name="Loureiro M.F."/>
            <person name="Lyra M.C.C.P."/>
            <person name="Madeira H.M.F."/>
            <person name="Manfio G.P."/>
            <person name="Maranhao A.Q."/>
            <person name="Martins W.S."/>
            <person name="di Mauro S.M.Z."/>
            <person name="de Medeiros S.R.B."/>
            <person name="Meissner R.V."/>
            <person name="Moreira M.A.M."/>
            <person name="Nascimento F.F."/>
            <person name="Nicolas M.F."/>
            <person name="Oliveira J.G."/>
            <person name="Oliveira S.C."/>
            <person name="Paixao R.F.C."/>
            <person name="Parente J.A."/>
            <person name="Pedrosa F.O."/>
            <person name="Pena S.D.J."/>
            <person name="Pereira J.O."/>
            <person name="Pereira M."/>
            <person name="Pinto L.S.R.C."/>
            <person name="Pinto L.S."/>
            <person name="Porto J.I.R."/>
            <person name="Potrich D.P."/>
            <person name="Ramalho-Neto C.E."/>
            <person name="Reis A.M.M."/>
            <person name="Rigo L.U."/>
            <person name="Rondinelli E."/>
            <person name="Santos E.B.P."/>
            <person name="Santos F.R."/>
            <person name="Schneider M.P.C."/>
            <person name="Seuanez H.N."/>
            <person name="Silva A.M.R."/>
            <person name="da Silva A.L.C."/>
            <person name="Silva D.W."/>
            <person name="Silva R."/>
            <person name="Simoes I.C."/>
            <person name="Simon D."/>
            <person name="Soares C.M.A."/>
            <person name="Soares R.B.A."/>
            <person name="Souza E.M."/>
            <person name="Souza K.R.L."/>
            <person name="Souza R.C."/>
            <person name="Steffens M.B.R."/>
            <person name="Steindel M."/>
            <person name="Teixeira S.R."/>
            <person name="Urmenyi T."/>
            <person name="Vettore A."/>
            <person name="Wassem R."/>
            <person name="Zaha A."/>
            <person name="Simpson A.J.G."/>
        </authorList>
    </citation>
    <scope>NUCLEOTIDE SEQUENCE [LARGE SCALE GENOMIC DNA]</scope>
    <source>
        <strain>ATCC 12472 / DSM 30191 / JCM 1249 / CCUG 213 / NBRC 12614 / NCIMB 9131 / NCTC 9757 / MK</strain>
    </source>
</reference>
<keyword id="KW-0997">Cell inner membrane</keyword>
<keyword id="KW-1003">Cell membrane</keyword>
<keyword id="KW-0472">Membrane</keyword>
<keyword id="KW-1185">Reference proteome</keyword>
<keyword id="KW-0677">Repeat</keyword>
<keyword id="KW-0812">Transmembrane</keyword>
<keyword id="KW-1133">Transmembrane helix</keyword>
<keyword id="KW-0813">Transport</keyword>
<evidence type="ECO:0000255" key="1">
    <source>
        <dbReference type="HAMAP-Rule" id="MF_01146"/>
    </source>
</evidence>
<proteinExistence type="inferred from homology"/>
<dbReference type="EMBL" id="AE016825">
    <property type="protein sequence ID" value="AAQ60532.1"/>
    <property type="molecule type" value="Genomic_DNA"/>
</dbReference>
<dbReference type="RefSeq" id="WP_011136411.1">
    <property type="nucleotide sequence ID" value="NC_005085.1"/>
</dbReference>
<dbReference type="SMR" id="Q7NU39"/>
<dbReference type="STRING" id="243365.CV_2864"/>
<dbReference type="KEGG" id="cvi:CV_2864"/>
<dbReference type="eggNOG" id="COG0580">
    <property type="taxonomic scope" value="Bacteria"/>
</dbReference>
<dbReference type="HOGENOM" id="CLU_020019_3_2_4"/>
<dbReference type="OrthoDB" id="9807293at2"/>
<dbReference type="Proteomes" id="UP000001424">
    <property type="component" value="Chromosome"/>
</dbReference>
<dbReference type="GO" id="GO:0005886">
    <property type="term" value="C:plasma membrane"/>
    <property type="evidence" value="ECO:0007669"/>
    <property type="project" value="UniProtKB-SubCell"/>
</dbReference>
<dbReference type="GO" id="GO:0015250">
    <property type="term" value="F:water channel activity"/>
    <property type="evidence" value="ECO:0007669"/>
    <property type="project" value="UniProtKB-UniRule"/>
</dbReference>
<dbReference type="CDD" id="cd00333">
    <property type="entry name" value="MIP"/>
    <property type="match status" value="1"/>
</dbReference>
<dbReference type="FunFam" id="1.20.1080.10:FF:000007">
    <property type="entry name" value="Aquaporin Z"/>
    <property type="match status" value="1"/>
</dbReference>
<dbReference type="Gene3D" id="1.20.1080.10">
    <property type="entry name" value="Glycerol uptake facilitator protein"/>
    <property type="match status" value="1"/>
</dbReference>
<dbReference type="HAMAP" id="MF_01146">
    <property type="entry name" value="Aquaporin_Z"/>
    <property type="match status" value="1"/>
</dbReference>
<dbReference type="InterPro" id="IPR023271">
    <property type="entry name" value="Aquaporin-like"/>
</dbReference>
<dbReference type="InterPro" id="IPR034294">
    <property type="entry name" value="Aquaporin_transptr"/>
</dbReference>
<dbReference type="InterPro" id="IPR023743">
    <property type="entry name" value="Aquaporin_Z"/>
</dbReference>
<dbReference type="InterPro" id="IPR000425">
    <property type="entry name" value="MIP"/>
</dbReference>
<dbReference type="InterPro" id="IPR022357">
    <property type="entry name" value="MIP_CS"/>
</dbReference>
<dbReference type="NCBIfam" id="TIGR00861">
    <property type="entry name" value="MIP"/>
    <property type="match status" value="1"/>
</dbReference>
<dbReference type="NCBIfam" id="NF003838">
    <property type="entry name" value="PRK05420.1"/>
    <property type="match status" value="1"/>
</dbReference>
<dbReference type="PANTHER" id="PTHR19139">
    <property type="entry name" value="AQUAPORIN TRANSPORTER"/>
    <property type="match status" value="1"/>
</dbReference>
<dbReference type="PANTHER" id="PTHR19139:SF199">
    <property type="entry name" value="MIP17260P"/>
    <property type="match status" value="1"/>
</dbReference>
<dbReference type="Pfam" id="PF00230">
    <property type="entry name" value="MIP"/>
    <property type="match status" value="1"/>
</dbReference>
<dbReference type="PRINTS" id="PR00783">
    <property type="entry name" value="MINTRINSICP"/>
</dbReference>
<dbReference type="SUPFAM" id="SSF81338">
    <property type="entry name" value="Aquaporin-like"/>
    <property type="match status" value="1"/>
</dbReference>
<dbReference type="PROSITE" id="PS00221">
    <property type="entry name" value="MIP"/>
    <property type="match status" value="1"/>
</dbReference>
<protein>
    <recommendedName>
        <fullName evidence="1">Aquaporin Z</fullName>
    </recommendedName>
</protein>
<gene>
    <name evidence="1" type="primary">aqpZ</name>
    <name type="ordered locus">CV_2864</name>
</gene>
<name>AQPZ_CHRVO</name>
<accession>Q7NU39</accession>